<reference key="1">
    <citation type="submission" date="2007-10" db="EMBL/GenBank/DDBJ databases">
        <title>Complete sequence of chromosome 1 of Burkholderia multivorans ATCC 17616.</title>
        <authorList>
            <person name="Copeland A."/>
            <person name="Lucas S."/>
            <person name="Lapidus A."/>
            <person name="Barry K."/>
            <person name="Glavina del Rio T."/>
            <person name="Dalin E."/>
            <person name="Tice H."/>
            <person name="Pitluck S."/>
            <person name="Chain P."/>
            <person name="Malfatti S."/>
            <person name="Shin M."/>
            <person name="Vergez L."/>
            <person name="Schmutz J."/>
            <person name="Larimer F."/>
            <person name="Land M."/>
            <person name="Hauser L."/>
            <person name="Kyrpides N."/>
            <person name="Kim E."/>
            <person name="Tiedje J."/>
            <person name="Richardson P."/>
        </authorList>
    </citation>
    <scope>NUCLEOTIDE SEQUENCE [LARGE SCALE GENOMIC DNA]</scope>
    <source>
        <strain>ATCC 17616 / 249</strain>
    </source>
</reference>
<reference key="2">
    <citation type="submission" date="2007-04" db="EMBL/GenBank/DDBJ databases">
        <title>Complete genome sequence of Burkholderia multivorans ATCC 17616.</title>
        <authorList>
            <person name="Ohtsubo Y."/>
            <person name="Yamashita A."/>
            <person name="Kurokawa K."/>
            <person name="Takami H."/>
            <person name="Yuhara S."/>
            <person name="Nishiyama E."/>
            <person name="Endo R."/>
            <person name="Miyazaki R."/>
            <person name="Ono A."/>
            <person name="Yano K."/>
            <person name="Ito M."/>
            <person name="Sota M."/>
            <person name="Yuji N."/>
            <person name="Hattori M."/>
            <person name="Tsuda M."/>
        </authorList>
    </citation>
    <scope>NUCLEOTIDE SEQUENCE [LARGE SCALE GENOMIC DNA]</scope>
    <source>
        <strain>ATCC 17616 / 249</strain>
    </source>
</reference>
<comment type="function">
    <text evidence="1">Catalyzes the reversible transfer of the terminal phosphate group between ATP and AMP. Plays an important role in cellular energy homeostasis and in adenine nucleotide metabolism.</text>
</comment>
<comment type="catalytic activity">
    <reaction evidence="1">
        <text>AMP + ATP = 2 ADP</text>
        <dbReference type="Rhea" id="RHEA:12973"/>
        <dbReference type="ChEBI" id="CHEBI:30616"/>
        <dbReference type="ChEBI" id="CHEBI:456215"/>
        <dbReference type="ChEBI" id="CHEBI:456216"/>
        <dbReference type="EC" id="2.7.4.3"/>
    </reaction>
</comment>
<comment type="pathway">
    <text evidence="1">Purine metabolism; AMP biosynthesis via salvage pathway; AMP from ADP: step 1/1.</text>
</comment>
<comment type="subunit">
    <text evidence="1">Monomer.</text>
</comment>
<comment type="subcellular location">
    <subcellularLocation>
        <location evidence="1">Cytoplasm</location>
    </subcellularLocation>
</comment>
<comment type="domain">
    <text evidence="1">Consists of three domains, a large central CORE domain and two small peripheral domains, NMPbind and LID, which undergo movements during catalysis. The LID domain closes over the site of phosphoryl transfer upon ATP binding. Assembling and dissambling the active center during each catalytic cycle provides an effective means to prevent ATP hydrolysis.</text>
</comment>
<comment type="similarity">
    <text evidence="1">Belongs to the adenylate kinase family.</text>
</comment>
<proteinExistence type="inferred from homology"/>
<protein>
    <recommendedName>
        <fullName evidence="1">Adenylate kinase</fullName>
        <shortName evidence="1">AK</shortName>
        <ecNumber evidence="1">2.7.4.3</ecNumber>
    </recommendedName>
    <alternativeName>
        <fullName evidence="1">ATP-AMP transphosphorylase</fullName>
    </alternativeName>
    <alternativeName>
        <fullName evidence="1">ATP:AMP phosphotransferase</fullName>
    </alternativeName>
    <alternativeName>
        <fullName evidence="1">Adenylate monophosphate kinase</fullName>
    </alternativeName>
</protein>
<accession>A9AGK1</accession>
<gene>
    <name evidence="1" type="primary">adk</name>
    <name type="ordered locus">Bmul_0748</name>
    <name type="ordered locus">BMULJ_02512</name>
</gene>
<keyword id="KW-0067">ATP-binding</keyword>
<keyword id="KW-0963">Cytoplasm</keyword>
<keyword id="KW-0418">Kinase</keyword>
<keyword id="KW-0545">Nucleotide biosynthesis</keyword>
<keyword id="KW-0547">Nucleotide-binding</keyword>
<keyword id="KW-1185">Reference proteome</keyword>
<keyword id="KW-0808">Transferase</keyword>
<organism>
    <name type="scientific">Burkholderia multivorans (strain ATCC 17616 / 249)</name>
    <dbReference type="NCBI Taxonomy" id="395019"/>
    <lineage>
        <taxon>Bacteria</taxon>
        <taxon>Pseudomonadati</taxon>
        <taxon>Pseudomonadota</taxon>
        <taxon>Betaproteobacteria</taxon>
        <taxon>Burkholderiales</taxon>
        <taxon>Burkholderiaceae</taxon>
        <taxon>Burkholderia</taxon>
        <taxon>Burkholderia cepacia complex</taxon>
    </lineage>
</organism>
<dbReference type="EC" id="2.7.4.3" evidence="1"/>
<dbReference type="EMBL" id="CP000868">
    <property type="protein sequence ID" value="ABX14443.1"/>
    <property type="molecule type" value="Genomic_DNA"/>
</dbReference>
<dbReference type="EMBL" id="AP009385">
    <property type="protein sequence ID" value="BAG44403.1"/>
    <property type="molecule type" value="Genomic_DNA"/>
</dbReference>
<dbReference type="RefSeq" id="WP_006398497.1">
    <property type="nucleotide sequence ID" value="NC_010804.1"/>
</dbReference>
<dbReference type="SMR" id="A9AGK1"/>
<dbReference type="STRING" id="395019.BMULJ_02512"/>
<dbReference type="GeneID" id="89571093"/>
<dbReference type="KEGG" id="bmj:BMULJ_02512"/>
<dbReference type="KEGG" id="bmu:Bmul_0748"/>
<dbReference type="eggNOG" id="COG0563">
    <property type="taxonomic scope" value="Bacteria"/>
</dbReference>
<dbReference type="HOGENOM" id="CLU_032354_1_2_4"/>
<dbReference type="UniPathway" id="UPA00588">
    <property type="reaction ID" value="UER00649"/>
</dbReference>
<dbReference type="Proteomes" id="UP000008815">
    <property type="component" value="Chromosome 1"/>
</dbReference>
<dbReference type="GO" id="GO:0005737">
    <property type="term" value="C:cytoplasm"/>
    <property type="evidence" value="ECO:0007669"/>
    <property type="project" value="UniProtKB-SubCell"/>
</dbReference>
<dbReference type="GO" id="GO:0004017">
    <property type="term" value="F:adenylate kinase activity"/>
    <property type="evidence" value="ECO:0007669"/>
    <property type="project" value="UniProtKB-UniRule"/>
</dbReference>
<dbReference type="GO" id="GO:0005524">
    <property type="term" value="F:ATP binding"/>
    <property type="evidence" value="ECO:0007669"/>
    <property type="project" value="UniProtKB-UniRule"/>
</dbReference>
<dbReference type="GO" id="GO:0044209">
    <property type="term" value="P:AMP salvage"/>
    <property type="evidence" value="ECO:0007669"/>
    <property type="project" value="UniProtKB-UniRule"/>
</dbReference>
<dbReference type="CDD" id="cd01428">
    <property type="entry name" value="ADK"/>
    <property type="match status" value="1"/>
</dbReference>
<dbReference type="FunFam" id="3.40.50.300:FF:000106">
    <property type="entry name" value="Adenylate kinase mitochondrial"/>
    <property type="match status" value="1"/>
</dbReference>
<dbReference type="Gene3D" id="3.40.50.300">
    <property type="entry name" value="P-loop containing nucleotide triphosphate hydrolases"/>
    <property type="match status" value="1"/>
</dbReference>
<dbReference type="HAMAP" id="MF_00235">
    <property type="entry name" value="Adenylate_kinase_Adk"/>
    <property type="match status" value="1"/>
</dbReference>
<dbReference type="InterPro" id="IPR006259">
    <property type="entry name" value="Adenyl_kin_sub"/>
</dbReference>
<dbReference type="InterPro" id="IPR000850">
    <property type="entry name" value="Adenylat/UMP-CMP_kin"/>
</dbReference>
<dbReference type="InterPro" id="IPR033690">
    <property type="entry name" value="Adenylat_kinase_CS"/>
</dbReference>
<dbReference type="InterPro" id="IPR007862">
    <property type="entry name" value="Adenylate_kinase_lid-dom"/>
</dbReference>
<dbReference type="InterPro" id="IPR027417">
    <property type="entry name" value="P-loop_NTPase"/>
</dbReference>
<dbReference type="NCBIfam" id="TIGR01351">
    <property type="entry name" value="adk"/>
    <property type="match status" value="1"/>
</dbReference>
<dbReference type="NCBIfam" id="NF001379">
    <property type="entry name" value="PRK00279.1-1"/>
    <property type="match status" value="1"/>
</dbReference>
<dbReference type="NCBIfam" id="NF001380">
    <property type="entry name" value="PRK00279.1-2"/>
    <property type="match status" value="1"/>
</dbReference>
<dbReference type="NCBIfam" id="NF001381">
    <property type="entry name" value="PRK00279.1-3"/>
    <property type="match status" value="1"/>
</dbReference>
<dbReference type="NCBIfam" id="NF011100">
    <property type="entry name" value="PRK14527.1"/>
    <property type="match status" value="1"/>
</dbReference>
<dbReference type="PANTHER" id="PTHR23359">
    <property type="entry name" value="NUCLEOTIDE KINASE"/>
    <property type="match status" value="1"/>
</dbReference>
<dbReference type="Pfam" id="PF00406">
    <property type="entry name" value="ADK"/>
    <property type="match status" value="1"/>
</dbReference>
<dbReference type="Pfam" id="PF05191">
    <property type="entry name" value="ADK_lid"/>
    <property type="match status" value="1"/>
</dbReference>
<dbReference type="PRINTS" id="PR00094">
    <property type="entry name" value="ADENYLTKNASE"/>
</dbReference>
<dbReference type="SUPFAM" id="SSF52540">
    <property type="entry name" value="P-loop containing nucleoside triphosphate hydrolases"/>
    <property type="match status" value="1"/>
</dbReference>
<dbReference type="PROSITE" id="PS00113">
    <property type="entry name" value="ADENYLATE_KINASE"/>
    <property type="match status" value="1"/>
</dbReference>
<name>KAD_BURM1</name>
<feature type="chain" id="PRO_1000100538" description="Adenylate kinase">
    <location>
        <begin position="1"/>
        <end position="220"/>
    </location>
</feature>
<feature type="region of interest" description="NMP" evidence="1">
    <location>
        <begin position="30"/>
        <end position="59"/>
    </location>
</feature>
<feature type="region of interest" description="LID" evidence="1">
    <location>
        <begin position="122"/>
        <end position="159"/>
    </location>
</feature>
<feature type="binding site" evidence="1">
    <location>
        <begin position="10"/>
        <end position="15"/>
    </location>
    <ligand>
        <name>ATP</name>
        <dbReference type="ChEBI" id="CHEBI:30616"/>
    </ligand>
</feature>
<feature type="binding site" evidence="1">
    <location>
        <position position="31"/>
    </location>
    <ligand>
        <name>AMP</name>
        <dbReference type="ChEBI" id="CHEBI:456215"/>
    </ligand>
</feature>
<feature type="binding site" evidence="1">
    <location>
        <position position="36"/>
    </location>
    <ligand>
        <name>AMP</name>
        <dbReference type="ChEBI" id="CHEBI:456215"/>
    </ligand>
</feature>
<feature type="binding site" evidence="1">
    <location>
        <begin position="57"/>
        <end position="59"/>
    </location>
    <ligand>
        <name>AMP</name>
        <dbReference type="ChEBI" id="CHEBI:456215"/>
    </ligand>
</feature>
<feature type="binding site" evidence="1">
    <location>
        <begin position="85"/>
        <end position="88"/>
    </location>
    <ligand>
        <name>AMP</name>
        <dbReference type="ChEBI" id="CHEBI:456215"/>
    </ligand>
</feature>
<feature type="binding site" evidence="1">
    <location>
        <position position="92"/>
    </location>
    <ligand>
        <name>AMP</name>
        <dbReference type="ChEBI" id="CHEBI:456215"/>
    </ligand>
</feature>
<feature type="binding site" evidence="1">
    <location>
        <position position="123"/>
    </location>
    <ligand>
        <name>ATP</name>
        <dbReference type="ChEBI" id="CHEBI:30616"/>
    </ligand>
</feature>
<feature type="binding site" evidence="1">
    <location>
        <begin position="132"/>
        <end position="133"/>
    </location>
    <ligand>
        <name>ATP</name>
        <dbReference type="ChEBI" id="CHEBI:30616"/>
    </ligand>
</feature>
<feature type="binding site" evidence="1">
    <location>
        <position position="156"/>
    </location>
    <ligand>
        <name>AMP</name>
        <dbReference type="ChEBI" id="CHEBI:456215"/>
    </ligand>
</feature>
<feature type="binding site" evidence="1">
    <location>
        <position position="167"/>
    </location>
    <ligand>
        <name>AMP</name>
        <dbReference type="ChEBI" id="CHEBI:456215"/>
    </ligand>
</feature>
<feature type="binding site" evidence="1">
    <location>
        <position position="206"/>
    </location>
    <ligand>
        <name>ATP</name>
        <dbReference type="ChEBI" id="CHEBI:30616"/>
    </ligand>
</feature>
<evidence type="ECO:0000255" key="1">
    <source>
        <dbReference type="HAMAP-Rule" id="MF_00235"/>
    </source>
</evidence>
<sequence>MRLILLGAPGAGKGTQANFIKEKFGIPQISTGDMLRAAVKAGTPLGVEAKGYMDAGKLVPDALIIGLVKERLKEADCANGYLFDGFPRTIAQADAMKEAGVAIDYVLEIDVPFSEIIERMSGRRTHPASGRTYHVKFNPPKVEGKDDVTGEPLIQRDDDKEETVKKRLEVYEAQTKPLITYYGDWAKRGEENGLKAPQYRKISGLGTVEEIRERAFDALK</sequence>